<keyword id="KW-1064">Adaptive immunity</keyword>
<keyword id="KW-1003">Cell membrane</keyword>
<keyword id="KW-1015">Disulfide bond</keyword>
<keyword id="KW-0391">Immunity</keyword>
<keyword id="KW-1280">Immunoglobulin</keyword>
<keyword id="KW-0393">Immunoglobulin domain</keyword>
<keyword id="KW-0472">Membrane</keyword>
<keyword id="KW-1267">Proteomics identification</keyword>
<keyword id="KW-1185">Reference proteome</keyword>
<keyword id="KW-0964">Secreted</keyword>
<keyword id="KW-0732">Signal</keyword>
<feature type="signal peptide" evidence="2">
    <location>
        <begin position="1"/>
        <end position="19"/>
    </location>
</feature>
<feature type="chain" id="PRO_5007390942" description="Immunoglobulin heavy variable 3-74" evidence="2">
    <location>
        <begin position="20"/>
        <end position="117"/>
    </location>
</feature>
<feature type="domain" description="Ig-like" evidence="3">
    <location>
        <begin position="20"/>
        <end position="117" status="greater than"/>
    </location>
</feature>
<feature type="region of interest" description="Framework-1" evidence="1">
    <location>
        <begin position="20"/>
        <end position="44"/>
    </location>
</feature>
<feature type="region of interest" description="Complementarity-determining-1" evidence="1">
    <location>
        <begin position="45"/>
        <end position="52"/>
    </location>
</feature>
<feature type="region of interest" description="Framework-2" evidence="1">
    <location>
        <begin position="53"/>
        <end position="69"/>
    </location>
</feature>
<feature type="region of interest" description="Complementarity-determining-2" evidence="1">
    <location>
        <begin position="70"/>
        <end position="77"/>
    </location>
</feature>
<feature type="region of interest" description="Framework-3" evidence="1">
    <location>
        <begin position="78"/>
        <end position="115"/>
    </location>
</feature>
<feature type="region of interest" description="Complementarity-determining-3" evidence="1">
    <location>
        <begin position="116"/>
        <end position="117" status="greater than"/>
    </location>
</feature>
<feature type="disulfide bond" evidence="3">
    <location>
        <begin position="41"/>
        <end position="115"/>
    </location>
</feature>
<feature type="non-terminal residue">
    <location>
        <position position="117"/>
    </location>
</feature>
<proteinExistence type="evidence at protein level"/>
<dbReference type="EMBL" id="AC245023">
    <property type="status" value="NOT_ANNOTATED_CDS"/>
    <property type="molecule type" value="Genomic_DNA"/>
</dbReference>
<dbReference type="SMR" id="A0A0B4J1X5"/>
<dbReference type="FunCoup" id="A0A0B4J1X5">
    <property type="interactions" value="327"/>
</dbReference>
<dbReference type="IMGT_GENE-DB" id="IGHV3-74"/>
<dbReference type="BioMuta" id="IGHV3-74"/>
<dbReference type="jPOST" id="A0A0B4J1X5"/>
<dbReference type="MassIVE" id="A0A0B4J1X5"/>
<dbReference type="PRIDE" id="A0A0B4J1X5"/>
<dbReference type="Pumba" id="A0A0B4J1X5"/>
<dbReference type="Ensembl" id="ENST00000424969.2">
    <property type="protein sequence ID" value="ENSP00000394447.2"/>
    <property type="gene ID" value="ENSG00000224650.2"/>
</dbReference>
<dbReference type="Ensembl" id="ENST00000633987.1">
    <property type="protein sequence ID" value="ENSP00000488600.1"/>
    <property type="gene ID" value="ENSG00000282305.1"/>
</dbReference>
<dbReference type="AGR" id="HGNC:5624"/>
<dbReference type="GeneCards" id="IGHV3-74"/>
<dbReference type="HGNC" id="HGNC:5624">
    <property type="gene designation" value="IGHV3-74"/>
</dbReference>
<dbReference type="HPA" id="ENSG00000224650">
    <property type="expression patterns" value="Group enriched (esophagus, salivary gland, urinary bladder)"/>
</dbReference>
<dbReference type="neXtProt" id="NX_A0A0B4J1X5"/>
<dbReference type="OpenTargets" id="ENSG00000224650"/>
<dbReference type="VEuPathDB" id="HostDB:ENSG00000224650"/>
<dbReference type="GeneTree" id="ENSGT01050000244871"/>
<dbReference type="HOGENOM" id="CLU_077975_5_2_1"/>
<dbReference type="InParanoid" id="A0A0B4J1X5"/>
<dbReference type="OMA" id="LEWIRWI"/>
<dbReference type="OrthoDB" id="9945861at2759"/>
<dbReference type="PAN-GO" id="A0A0B4J1X5">
    <property type="GO annotations" value="11 GO annotations based on evolutionary models"/>
</dbReference>
<dbReference type="PhylomeDB" id="A0A0B4J1X5"/>
<dbReference type="SignaLink" id="A0A0B4J1X5"/>
<dbReference type="ChiTaRS" id="IGHV3-74">
    <property type="organism name" value="human"/>
</dbReference>
<dbReference type="Pharos" id="A0A0B4J1X5">
    <property type="development level" value="Tdark"/>
</dbReference>
<dbReference type="PRO" id="PR:A0A0B4J1X5"/>
<dbReference type="Proteomes" id="UP000005640">
    <property type="component" value="Chromosome 14"/>
</dbReference>
<dbReference type="RNAct" id="A0A0B4J1X5">
    <property type="molecule type" value="protein"/>
</dbReference>
<dbReference type="Bgee" id="ENSG00000224650">
    <property type="expression patterns" value="Expressed in rectum and 96 other cell types or tissues"/>
</dbReference>
<dbReference type="GO" id="GO:0005576">
    <property type="term" value="C:extracellular region"/>
    <property type="evidence" value="ECO:0007669"/>
    <property type="project" value="UniProtKB-SubCell"/>
</dbReference>
<dbReference type="GO" id="GO:0019814">
    <property type="term" value="C:immunoglobulin complex"/>
    <property type="evidence" value="ECO:0007669"/>
    <property type="project" value="UniProtKB-KW"/>
</dbReference>
<dbReference type="GO" id="GO:0005886">
    <property type="term" value="C:plasma membrane"/>
    <property type="evidence" value="ECO:0007669"/>
    <property type="project" value="UniProtKB-SubCell"/>
</dbReference>
<dbReference type="GO" id="GO:0003823">
    <property type="term" value="F:antigen binding"/>
    <property type="evidence" value="ECO:0000318"/>
    <property type="project" value="GO_Central"/>
</dbReference>
<dbReference type="GO" id="GO:0016064">
    <property type="term" value="P:immunoglobulin mediated immune response"/>
    <property type="evidence" value="ECO:0000318"/>
    <property type="project" value="GO_Central"/>
</dbReference>
<dbReference type="CDD" id="cd04981">
    <property type="entry name" value="IgV_H"/>
    <property type="match status" value="1"/>
</dbReference>
<dbReference type="FunFam" id="2.60.40.10:FF:000942">
    <property type="entry name" value="Immunoglobulin heavy variable 3-23"/>
    <property type="match status" value="1"/>
</dbReference>
<dbReference type="Gene3D" id="2.60.40.10">
    <property type="entry name" value="Immunoglobulins"/>
    <property type="match status" value="1"/>
</dbReference>
<dbReference type="InterPro" id="IPR007110">
    <property type="entry name" value="Ig-like_dom"/>
</dbReference>
<dbReference type="InterPro" id="IPR036179">
    <property type="entry name" value="Ig-like_dom_sf"/>
</dbReference>
<dbReference type="InterPro" id="IPR013783">
    <property type="entry name" value="Ig-like_fold"/>
</dbReference>
<dbReference type="InterPro" id="IPR013106">
    <property type="entry name" value="Ig_V-set"/>
</dbReference>
<dbReference type="InterPro" id="IPR050199">
    <property type="entry name" value="IgHV"/>
</dbReference>
<dbReference type="PANTHER" id="PTHR23266">
    <property type="entry name" value="IMMUNOGLOBULIN HEAVY CHAIN"/>
    <property type="match status" value="1"/>
</dbReference>
<dbReference type="Pfam" id="PF07686">
    <property type="entry name" value="V-set"/>
    <property type="match status" value="1"/>
</dbReference>
<dbReference type="SMART" id="SM00406">
    <property type="entry name" value="IGv"/>
    <property type="match status" value="1"/>
</dbReference>
<dbReference type="SUPFAM" id="SSF48726">
    <property type="entry name" value="Immunoglobulin"/>
    <property type="match status" value="1"/>
</dbReference>
<dbReference type="PROSITE" id="PS50835">
    <property type="entry name" value="IG_LIKE"/>
    <property type="match status" value="1"/>
</dbReference>
<evidence type="ECO:0000250" key="1">
    <source>
        <dbReference type="UniProtKB" id="P23083"/>
    </source>
</evidence>
<evidence type="ECO:0000255" key="2"/>
<evidence type="ECO:0000255" key="3">
    <source>
        <dbReference type="PROSITE-ProRule" id="PRU00114"/>
    </source>
</evidence>
<evidence type="ECO:0000303" key="4">
    <source>
    </source>
</evidence>
<evidence type="ECO:0000303" key="5">
    <source>
    </source>
</evidence>
<evidence type="ECO:0000303" key="6">
    <source>
    </source>
</evidence>
<evidence type="ECO:0000303" key="7">
    <source>
    </source>
</evidence>
<evidence type="ECO:0000303" key="8">
    <source>
    </source>
</evidence>
<evidence type="ECO:0000303" key="9">
    <source ref="3"/>
</evidence>
<evidence type="ECO:0000305" key="10"/>
<protein>
    <recommendedName>
        <fullName evidence="4 9">Immunoglobulin heavy variable 3-74</fullName>
    </recommendedName>
</protein>
<sequence>MEFGLSWVFLVAILKGVQCEVQLVESGGGLVQPGGSLRLSCAASGFTFSSYWMHWVRQAPGKGLVWVSRINSDGSSTSYADSVKGRFTISRDNAKNTLYLQMNSLRAEDTAVYYCAR</sequence>
<organism>
    <name type="scientific">Homo sapiens</name>
    <name type="common">Human</name>
    <dbReference type="NCBI Taxonomy" id="9606"/>
    <lineage>
        <taxon>Eukaryota</taxon>
        <taxon>Metazoa</taxon>
        <taxon>Chordata</taxon>
        <taxon>Craniata</taxon>
        <taxon>Vertebrata</taxon>
        <taxon>Euteleostomi</taxon>
        <taxon>Mammalia</taxon>
        <taxon>Eutheria</taxon>
        <taxon>Euarchontoglires</taxon>
        <taxon>Primates</taxon>
        <taxon>Haplorrhini</taxon>
        <taxon>Catarrhini</taxon>
        <taxon>Hominidae</taxon>
        <taxon>Homo</taxon>
    </lineage>
</organism>
<gene>
    <name evidence="4 9" type="primary">IGHV3-74</name>
</gene>
<accession>A0A0B4J1X5</accession>
<name>HV374_HUMAN</name>
<comment type="function">
    <text evidence="5 6 7 8">V region of the variable domain of immunoglobulin heavy chains that participates in the antigen recognition (PubMed:24600447). Immunoglobulins, also known as antibodies, are membrane-bound or secreted glycoproteins produced by B lymphocytes. In the recognition phase of humoral immunity, the membrane-bound immunoglobulins serve as receptors which, upon binding of a specific antigen, trigger the clonal expansion and differentiation of B lymphocytes into immunoglobulins-secreting plasma cells. Secreted immunoglobulins mediate the effector phase of humoral immunity, which results in the elimination of bound antigens (PubMed:20176268, PubMed:22158414). The antigen binding site is formed by the variable domain of one heavy chain, together with that of its associated light chain. Thus, each immunoglobulin has two antigen binding sites with remarkable affinity for a particular antigen. The variable domains are assembled by a process called V-(D)-J rearrangement and can then be subjected to somatic hypermutations which, after exposure to antigen and selection, allow affinity maturation for a particular antigen (PubMed:17576170, PubMed:20176268).</text>
</comment>
<comment type="subunit">
    <text evidence="6">Immunoglobulins are composed of two identical heavy chains and two identical light chains; disulfide-linked.</text>
</comment>
<comment type="subcellular location">
    <subcellularLocation>
        <location evidence="6 7">Secreted</location>
    </subcellularLocation>
    <subcellularLocation>
        <location evidence="6 7">Cell membrane</location>
    </subcellularLocation>
</comment>
<comment type="polymorphism">
    <text evidence="10">There are several alleles. The sequence shown is that of IMGT allele IGHV3-74*01.</text>
</comment>
<comment type="caution">
    <text evidence="10">For examples of full-length immunoglobulin heavy chains (of different isotypes) see AC P0DOX2, AC P0DOX3, AC P0DOX4, AC P0DOX5 and AC P0DOX6.</text>
</comment>
<reference key="1">
    <citation type="journal article" date="2003" name="Nature">
        <title>The DNA sequence and analysis of human chromosome 14.</title>
        <authorList>
            <person name="Heilig R."/>
            <person name="Eckenberg R."/>
            <person name="Petit J.-L."/>
            <person name="Fonknechten N."/>
            <person name="Da Silva C."/>
            <person name="Cattolico L."/>
            <person name="Levy M."/>
            <person name="Barbe V."/>
            <person name="De Berardinis V."/>
            <person name="Ureta-Vidal A."/>
            <person name="Pelletier E."/>
            <person name="Vico V."/>
            <person name="Anthouard V."/>
            <person name="Rowen L."/>
            <person name="Madan A."/>
            <person name="Qin S."/>
            <person name="Sun H."/>
            <person name="Du H."/>
            <person name="Pepin K."/>
            <person name="Artiguenave F."/>
            <person name="Robert C."/>
            <person name="Cruaud C."/>
            <person name="Bruels T."/>
            <person name="Jaillon O."/>
            <person name="Friedlander L."/>
            <person name="Samson G."/>
            <person name="Brottier P."/>
            <person name="Cure S."/>
            <person name="Segurens B."/>
            <person name="Aniere F."/>
            <person name="Samain S."/>
            <person name="Crespeau H."/>
            <person name="Abbasi N."/>
            <person name="Aiach N."/>
            <person name="Boscus D."/>
            <person name="Dickhoff R."/>
            <person name="Dors M."/>
            <person name="Dubois I."/>
            <person name="Friedman C."/>
            <person name="Gouyvenoux M."/>
            <person name="James R."/>
            <person name="Madan A."/>
            <person name="Mairey-Estrada B."/>
            <person name="Mangenot S."/>
            <person name="Martins N."/>
            <person name="Menard M."/>
            <person name="Oztas S."/>
            <person name="Ratcliffe A."/>
            <person name="Shaffer T."/>
            <person name="Trask B."/>
            <person name="Vacherie B."/>
            <person name="Bellemere C."/>
            <person name="Belser C."/>
            <person name="Besnard-Gonnet M."/>
            <person name="Bartol-Mavel D."/>
            <person name="Boutard M."/>
            <person name="Briez-Silla S."/>
            <person name="Combette S."/>
            <person name="Dufosse-Laurent V."/>
            <person name="Ferron C."/>
            <person name="Lechaplais C."/>
            <person name="Louesse C."/>
            <person name="Muselet D."/>
            <person name="Magdelenat G."/>
            <person name="Pateau E."/>
            <person name="Petit E."/>
            <person name="Sirvain-Trukniewicz P."/>
            <person name="Trybou A."/>
            <person name="Vega-Czarny N."/>
            <person name="Bataille E."/>
            <person name="Bluet E."/>
            <person name="Bordelais I."/>
            <person name="Dubois M."/>
            <person name="Dumont C."/>
            <person name="Guerin T."/>
            <person name="Haffray S."/>
            <person name="Hammadi R."/>
            <person name="Muanga J."/>
            <person name="Pellouin V."/>
            <person name="Robert D."/>
            <person name="Wunderle E."/>
            <person name="Gauguet G."/>
            <person name="Roy A."/>
            <person name="Sainte-Marthe L."/>
            <person name="Verdier J."/>
            <person name="Verdier-Discala C."/>
            <person name="Hillier L.W."/>
            <person name="Fulton L."/>
            <person name="McPherson J."/>
            <person name="Matsuda F."/>
            <person name="Wilson R."/>
            <person name="Scarpelli C."/>
            <person name="Gyapay G."/>
            <person name="Wincker P."/>
            <person name="Saurin W."/>
            <person name="Quetier F."/>
            <person name="Waterston R."/>
            <person name="Hood L."/>
            <person name="Weissenbach J."/>
        </authorList>
    </citation>
    <scope>NUCLEOTIDE SEQUENCE [LARGE SCALE GENOMIC DNA] (IMGT ALLELE IGHV3-74*01)</scope>
</reference>
<reference key="2">
    <citation type="journal article" date="2001" name="Exp. Clin. Immunogenet.">
        <title>Nomenclature of the human immunoglobulin heavy (IGH) genes.</title>
        <authorList>
            <person name="Lefranc M.P."/>
        </authorList>
    </citation>
    <scope>NOMENCLATURE</scope>
</reference>
<reference key="3">
    <citation type="book" date="2001" name="The Immunoglobulin FactsBook.">
        <title>The Immunoglobulin FactsBook.</title>
        <editorList>
            <person name="Lefranc M.P."/>
            <person name="Lefranc G."/>
        </editorList>
        <authorList>
            <person name="Lefranc M.P."/>
            <person name="Lefranc G."/>
        </authorList>
    </citation>
    <scope>NOMENCLATURE</scope>
</reference>
<reference key="4">
    <citation type="journal article" date="2007" name="Annu. Rev. Genet.">
        <title>Immunoglobulin somatic hypermutation.</title>
        <authorList>
            <person name="Teng G."/>
            <person name="Papavasiliou F.N."/>
        </authorList>
    </citation>
    <scope>REVIEW ON SOMATIC HYPERMUTATION</scope>
</reference>
<reference key="5">
    <citation type="journal article" date="2010" name="J. Allergy Clin. Immunol.">
        <title>Structure and function of immunoglobulins.</title>
        <authorList>
            <person name="Schroeder H.W. Jr."/>
            <person name="Cavacini L."/>
        </authorList>
    </citation>
    <scope>REVIEW ON IMMUNOGLOBULINS</scope>
</reference>
<reference key="6">
    <citation type="journal article" date="2012" name="Nat. Rev. Immunol.">
        <title>Molecular programming of B cell memory.</title>
        <authorList>
            <person name="McHeyzer-Williams M."/>
            <person name="Okitsu S."/>
            <person name="Wang N."/>
            <person name="McHeyzer-Williams L."/>
        </authorList>
    </citation>
    <scope>REVIEW ON FUNCTION</scope>
</reference>
<reference key="7">
    <citation type="journal article" date="2014" name="Front. Immunol.">
        <title>Immunoglobulin and T Cell Receptor Genes: IMGT((R)) and the Birth and Rise of Immunoinformatics.</title>
        <authorList>
            <person name="Lefranc M.P."/>
        </authorList>
    </citation>
    <scope>NOMENCLATURE</scope>
</reference>